<name>EPD1_CANMA</name>
<accession>P56092</accession>
<protein>
    <recommendedName>
        <fullName>Protein EPD1</fullName>
    </recommendedName>
    <alternativeName>
        <fullName>Essential for pseudohyphal development 1</fullName>
    </alternativeName>
</protein>
<comment type="subcellular location">
    <subcellularLocation>
        <location evidence="4">Cell membrane</location>
        <topology evidence="4">Lipid-anchor</topology>
        <topology evidence="4">GPI-anchor</topology>
    </subcellularLocation>
</comment>
<comment type="similarity">
    <text evidence="4">Belongs to the glycosyl hydrolase 72 family.</text>
</comment>
<sequence>MLLNSLFPSILAAATFVTSAAAEDLPPIEIVGNKFFYSNNGSQFYIKGIAYQQNNLDSNSTFVDPLADADNCKRDIPYLEQVDTNVIRVYALDVTQDHTECMQMLQDAGIYIIADLSQPDESINRNDPQWNLDLFERYTSVVDKFHNYTNVLGFFAGNEVTNNVSNTDASAFVKAAIRDTKAYIKAKGYRTIPVGYSANDDSDIRVSLARYFACGDEDESADFFGMNMYEWCGSSSFKASGYESATDDYKNLGIPIFFSEYGCNEVTPRKFQEVGTLFGSDMTDVWSGGIVYMYLQEENNYGLVSVSGSSVSTLQDFNSYKSEILDISPSSVQASAESASGVSRTSCPTNTDNWEASTELPPTPDKDICDCMSSSLKCVVADNVSTDDYSDLFDYVCAKIDCSGINANATTGDYGAYSPCGAKDKLSFVLNLYYEEQNESKSACDFSGSASLQSASTASSCAAYLSSAGVSGLGTVQGSVRTDTSEATTDSGSGSSNSGSASSSKSTSSSTSSGSSGSKSAATAVTVTTLTKIAAVGVSIIVGFGLITM</sequence>
<evidence type="ECO:0000250" key="1">
    <source>
        <dbReference type="UniProtKB" id="Q06135"/>
    </source>
</evidence>
<evidence type="ECO:0000255" key="2"/>
<evidence type="ECO:0000256" key="3">
    <source>
        <dbReference type="SAM" id="MobiDB-lite"/>
    </source>
</evidence>
<evidence type="ECO:0000305" key="4"/>
<feature type="signal peptide" evidence="2">
    <location>
        <begin position="1"/>
        <end position="22"/>
    </location>
</feature>
<feature type="chain" id="PRO_0000010487" description="Protein EPD1">
    <location>
        <begin position="23"/>
        <end status="unknown"/>
    </location>
</feature>
<feature type="propeptide" id="PRO_0000010488" description="Removed in mature form" evidence="2">
    <location>
        <begin status="unknown"/>
        <end position="549"/>
    </location>
</feature>
<feature type="region of interest" description="Disordered" evidence="3">
    <location>
        <begin position="336"/>
        <end position="361"/>
    </location>
</feature>
<feature type="region of interest" description="Disordered" evidence="3">
    <location>
        <begin position="479"/>
        <end position="519"/>
    </location>
</feature>
<feature type="compositionally biased region" description="Polar residues" evidence="3">
    <location>
        <begin position="336"/>
        <end position="356"/>
    </location>
</feature>
<feature type="compositionally biased region" description="Low complexity" evidence="3">
    <location>
        <begin position="487"/>
        <end position="519"/>
    </location>
</feature>
<feature type="glycosylation site" description="N-linked (GlcNAc...) asparagine" evidence="2">
    <location>
        <position position="40"/>
    </location>
</feature>
<feature type="glycosylation site" description="N-linked (GlcNAc...) asparagine" evidence="2">
    <location>
        <position position="59"/>
    </location>
</feature>
<feature type="glycosylation site" description="N-linked (GlcNAc...) asparagine" evidence="2">
    <location>
        <position position="147"/>
    </location>
</feature>
<feature type="glycosylation site" description="N-linked (GlcNAc...) asparagine" evidence="2">
    <location>
        <position position="163"/>
    </location>
</feature>
<feature type="glycosylation site" description="N-linked (GlcNAc...) asparagine" evidence="2">
    <location>
        <position position="383"/>
    </location>
</feature>
<feature type="glycosylation site" description="N-linked (GlcNAc...) asparagine" evidence="2">
    <location>
        <position position="408"/>
    </location>
</feature>
<feature type="glycosylation site" description="N-linked (GlcNAc...) asparagine" evidence="2">
    <location>
        <position position="438"/>
    </location>
</feature>
<feature type="disulfide bond" evidence="1">
    <location>
        <begin position="72"/>
        <end position="101"/>
    </location>
</feature>
<feature type="disulfide bond" evidence="1">
    <location>
        <begin position="214"/>
        <end position="347"/>
    </location>
</feature>
<feature type="disulfide bond" evidence="1">
    <location>
        <begin position="232"/>
        <end position="263"/>
    </location>
</feature>
<feature type="disulfide bond" evidence="1">
    <location>
        <begin position="369"/>
        <end position="420"/>
    </location>
</feature>
<feature type="disulfide bond" evidence="1">
    <location>
        <begin position="378"/>
        <end position="444"/>
    </location>
</feature>
<feature type="disulfide bond" evidence="1">
    <location>
        <begin position="397"/>
        <end position="402"/>
    </location>
</feature>
<proteinExistence type="inferred from homology"/>
<dbReference type="EMBL" id="AB005130">
    <property type="protein sequence ID" value="BAA21103.1"/>
    <property type="molecule type" value="Genomic_DNA"/>
</dbReference>
<dbReference type="SMR" id="P56092"/>
<dbReference type="CAZy" id="CBM43">
    <property type="family name" value="Carbohydrate-Binding Module Family 43"/>
</dbReference>
<dbReference type="CAZy" id="GH72">
    <property type="family name" value="Glycoside Hydrolase Family 72"/>
</dbReference>
<dbReference type="GlyCosmos" id="P56092">
    <property type="glycosylation" value="7 sites, No reported glycans"/>
</dbReference>
<dbReference type="GO" id="GO:0005886">
    <property type="term" value="C:plasma membrane"/>
    <property type="evidence" value="ECO:0007669"/>
    <property type="project" value="UniProtKB-SubCell"/>
</dbReference>
<dbReference type="GO" id="GO:0098552">
    <property type="term" value="C:side of membrane"/>
    <property type="evidence" value="ECO:0007669"/>
    <property type="project" value="UniProtKB-KW"/>
</dbReference>
<dbReference type="GO" id="GO:0042124">
    <property type="term" value="F:1,3-beta-glucanosyltransferase activity"/>
    <property type="evidence" value="ECO:0007669"/>
    <property type="project" value="TreeGrafter"/>
</dbReference>
<dbReference type="GO" id="GO:0071970">
    <property type="term" value="P:fungal-type cell wall (1-&gt;3)-beta-D-glucan biosynthetic process"/>
    <property type="evidence" value="ECO:0007669"/>
    <property type="project" value="TreeGrafter"/>
</dbReference>
<dbReference type="GO" id="GO:0031505">
    <property type="term" value="P:fungal-type cell wall organization"/>
    <property type="evidence" value="ECO:0007669"/>
    <property type="project" value="TreeGrafter"/>
</dbReference>
<dbReference type="FunFam" id="1.20.58.1040:FF:000005">
    <property type="entry name" value="1,3-beta-glucanosyltransferase"/>
    <property type="match status" value="1"/>
</dbReference>
<dbReference type="FunFam" id="3.20.20.80:FF:000038">
    <property type="entry name" value="1,3-beta-glucanosyltransferase"/>
    <property type="match status" value="1"/>
</dbReference>
<dbReference type="Gene3D" id="1.20.58.1040">
    <property type="match status" value="1"/>
</dbReference>
<dbReference type="Gene3D" id="3.20.20.80">
    <property type="entry name" value="Glycosidases"/>
    <property type="match status" value="1"/>
</dbReference>
<dbReference type="InterPro" id="IPR004886">
    <property type="entry name" value="Glucanosyltransferase"/>
</dbReference>
<dbReference type="InterPro" id="IPR017853">
    <property type="entry name" value="Glycoside_hydrolase_SF"/>
</dbReference>
<dbReference type="InterPro" id="IPR012946">
    <property type="entry name" value="X8"/>
</dbReference>
<dbReference type="PANTHER" id="PTHR31468">
    <property type="entry name" value="1,3-BETA-GLUCANOSYLTRANSFERASE GAS1"/>
    <property type="match status" value="1"/>
</dbReference>
<dbReference type="PANTHER" id="PTHR31468:SF2">
    <property type="entry name" value="1,3-BETA-GLUCANOSYLTRANSFERASE GAS1"/>
    <property type="match status" value="1"/>
</dbReference>
<dbReference type="Pfam" id="PF03198">
    <property type="entry name" value="Glyco_hydro_72"/>
    <property type="match status" value="1"/>
</dbReference>
<dbReference type="Pfam" id="PF07983">
    <property type="entry name" value="X8"/>
    <property type="match status" value="1"/>
</dbReference>
<dbReference type="SMART" id="SM00768">
    <property type="entry name" value="X8"/>
    <property type="match status" value="1"/>
</dbReference>
<dbReference type="SUPFAM" id="SSF51445">
    <property type="entry name" value="(Trans)glycosidases"/>
    <property type="match status" value="1"/>
</dbReference>
<organism>
    <name type="scientific">Candida maltosa</name>
    <name type="common">Yeast</name>
    <dbReference type="NCBI Taxonomy" id="5479"/>
    <lineage>
        <taxon>Eukaryota</taxon>
        <taxon>Fungi</taxon>
        <taxon>Dikarya</taxon>
        <taxon>Ascomycota</taxon>
        <taxon>Saccharomycotina</taxon>
        <taxon>Pichiomycetes</taxon>
        <taxon>Debaryomycetaceae</taxon>
        <taxon>Candida/Lodderomyces clade</taxon>
        <taxon>Candida</taxon>
    </lineage>
</organism>
<gene>
    <name type="primary">EPD1</name>
</gene>
<keyword id="KW-1003">Cell membrane</keyword>
<keyword id="KW-1015">Disulfide bond</keyword>
<keyword id="KW-0325">Glycoprotein</keyword>
<keyword id="KW-0336">GPI-anchor</keyword>
<keyword id="KW-0449">Lipoprotein</keyword>
<keyword id="KW-0472">Membrane</keyword>
<keyword id="KW-0732">Signal</keyword>
<reference key="1">
    <citation type="submission" date="1997-07" db="EMBL/GenBank/DDBJ databases">
        <authorList>
            <person name="Nakazawa T."/>
        </authorList>
    </citation>
    <scope>NUCLEOTIDE SEQUENCE [GENOMIC DNA]</scope>
    <source>
        <strain>ATCC 28140 / CBS 5611 / IAM 12247 / JCM 1504 / NBRC 1977</strain>
    </source>
</reference>